<feature type="chain" id="PRO_1000139627" description="Alkanesulfonate monooxygenase">
    <location>
        <begin position="1"/>
        <end position="387"/>
    </location>
</feature>
<dbReference type="EC" id="1.14.14.5" evidence="1"/>
<dbReference type="EMBL" id="CP001068">
    <property type="protein sequence ID" value="ACD26359.1"/>
    <property type="molecule type" value="Genomic_DNA"/>
</dbReference>
<dbReference type="SMR" id="B2UAU3"/>
<dbReference type="STRING" id="402626.Rpic_1215"/>
<dbReference type="KEGG" id="rpi:Rpic_1215"/>
<dbReference type="PATRIC" id="fig|402626.5.peg.2417"/>
<dbReference type="eggNOG" id="COG2141">
    <property type="taxonomic scope" value="Bacteria"/>
</dbReference>
<dbReference type="HOGENOM" id="CLU_027853_1_0_4"/>
<dbReference type="GO" id="GO:0008726">
    <property type="term" value="F:alkanesulfonate monooxygenase activity"/>
    <property type="evidence" value="ECO:0007669"/>
    <property type="project" value="UniProtKB-UniRule"/>
</dbReference>
<dbReference type="GO" id="GO:0046306">
    <property type="term" value="P:alkanesulfonate catabolic process"/>
    <property type="evidence" value="ECO:0007669"/>
    <property type="project" value="TreeGrafter"/>
</dbReference>
<dbReference type="CDD" id="cd01094">
    <property type="entry name" value="Alkanesulfonate_monoxygenase"/>
    <property type="match status" value="1"/>
</dbReference>
<dbReference type="FunFam" id="3.20.20.30:FF:000001">
    <property type="entry name" value="Alkanesulfonate monooxygenase"/>
    <property type="match status" value="1"/>
</dbReference>
<dbReference type="Gene3D" id="3.20.20.30">
    <property type="entry name" value="Luciferase-like domain"/>
    <property type="match status" value="1"/>
</dbReference>
<dbReference type="HAMAP" id="MF_01229">
    <property type="entry name" value="Alkanesulf_monooxygen"/>
    <property type="match status" value="1"/>
</dbReference>
<dbReference type="InterPro" id="IPR019911">
    <property type="entry name" value="Alkanesulphonate_mOase_FMN-dep"/>
</dbReference>
<dbReference type="InterPro" id="IPR011251">
    <property type="entry name" value="Luciferase-like_dom"/>
</dbReference>
<dbReference type="InterPro" id="IPR036661">
    <property type="entry name" value="Luciferase-like_sf"/>
</dbReference>
<dbReference type="InterPro" id="IPR050172">
    <property type="entry name" value="SsuD_RutA_monooxygenase"/>
</dbReference>
<dbReference type="NCBIfam" id="TIGR03565">
    <property type="entry name" value="alk_sulf_monoox"/>
    <property type="match status" value="1"/>
</dbReference>
<dbReference type="NCBIfam" id="NF001939">
    <property type="entry name" value="PRK00719.1"/>
    <property type="match status" value="1"/>
</dbReference>
<dbReference type="PANTHER" id="PTHR42847">
    <property type="entry name" value="ALKANESULFONATE MONOOXYGENASE"/>
    <property type="match status" value="1"/>
</dbReference>
<dbReference type="PANTHER" id="PTHR42847:SF4">
    <property type="entry name" value="ALKANESULFONATE MONOOXYGENASE-RELATED"/>
    <property type="match status" value="1"/>
</dbReference>
<dbReference type="Pfam" id="PF00296">
    <property type="entry name" value="Bac_luciferase"/>
    <property type="match status" value="1"/>
</dbReference>
<dbReference type="SUPFAM" id="SSF51679">
    <property type="entry name" value="Bacterial luciferase-like"/>
    <property type="match status" value="1"/>
</dbReference>
<evidence type="ECO:0000255" key="1">
    <source>
        <dbReference type="HAMAP-Rule" id="MF_01229"/>
    </source>
</evidence>
<reference key="1">
    <citation type="submission" date="2008-05" db="EMBL/GenBank/DDBJ databases">
        <title>Complete sequence of chromosome 1 of Ralstonia pickettii 12J.</title>
        <authorList>
            <person name="Lucas S."/>
            <person name="Copeland A."/>
            <person name="Lapidus A."/>
            <person name="Glavina del Rio T."/>
            <person name="Dalin E."/>
            <person name="Tice H."/>
            <person name="Bruce D."/>
            <person name="Goodwin L."/>
            <person name="Pitluck S."/>
            <person name="Meincke L."/>
            <person name="Brettin T."/>
            <person name="Detter J.C."/>
            <person name="Han C."/>
            <person name="Kuske C.R."/>
            <person name="Schmutz J."/>
            <person name="Larimer F."/>
            <person name="Land M."/>
            <person name="Hauser L."/>
            <person name="Kyrpides N."/>
            <person name="Mikhailova N."/>
            <person name="Marsh T."/>
            <person name="Richardson P."/>
        </authorList>
    </citation>
    <scope>NUCLEOTIDE SEQUENCE [LARGE SCALE GENOMIC DNA]</scope>
    <source>
        <strain>12J</strain>
    </source>
</reference>
<protein>
    <recommendedName>
        <fullName evidence="1">Alkanesulfonate monooxygenase</fullName>
        <ecNumber evidence="1">1.14.14.5</ecNumber>
    </recommendedName>
    <alternativeName>
        <fullName evidence="1">FMNH2-dependent aliphatic sulfonate monooxygenase</fullName>
    </alternativeName>
</protein>
<comment type="function">
    <text evidence="1">Catalyzes the desulfonation of aliphatic sulfonates.</text>
</comment>
<comment type="catalytic activity">
    <reaction evidence="1">
        <text>an alkanesulfonate + FMNH2 + O2 = an aldehyde + FMN + sulfite + H2O + 2 H(+)</text>
        <dbReference type="Rhea" id="RHEA:23064"/>
        <dbReference type="ChEBI" id="CHEBI:15377"/>
        <dbReference type="ChEBI" id="CHEBI:15378"/>
        <dbReference type="ChEBI" id="CHEBI:15379"/>
        <dbReference type="ChEBI" id="CHEBI:17359"/>
        <dbReference type="ChEBI" id="CHEBI:17478"/>
        <dbReference type="ChEBI" id="CHEBI:57618"/>
        <dbReference type="ChEBI" id="CHEBI:58210"/>
        <dbReference type="ChEBI" id="CHEBI:134249"/>
        <dbReference type="EC" id="1.14.14.5"/>
    </reaction>
</comment>
<comment type="similarity">
    <text evidence="1">Belongs to the SsuD family.</text>
</comment>
<gene>
    <name evidence="1" type="primary">ssuD</name>
    <name type="ordered locus">Rpic_1215</name>
</gene>
<sequence length="387" mass="41920">MQVFWFIPTHGDSRYLGTAEGARQVDHTYLQQVAVAADTLGYEGVLIPTGRSCEDPWVVAASLIPVTKRLRFLVAVRPGLMAPTLAARMAATYDRLSNGRLLVNLVTGGDPAELAGDGLFLDHAQRYEASEEFIRIWRETLAASHEGAALDYTGKHLSVKGAKVLYPPVQRPHPPVYFGGSSEAAHELAAEQVDSYLTWGEPPAAVAEKIADVRARAAKHGRTVRFGIRLHVIVRETEDEAWAAADKLISKLDDDTVARAQEAFRKMDSAGQQRMAALHANGVKRTRADLEISPNLWAGVGLVRGGAGTALVGDPQTVAARMKEYADLGIDTFVLSGYPHLEEAYRFAELVFPLLPRSVRDKLPGNVLNGPFGEVIATGIVPRVAAS</sequence>
<proteinExistence type="inferred from homology"/>
<organism>
    <name type="scientific">Ralstonia pickettii (strain 12J)</name>
    <dbReference type="NCBI Taxonomy" id="402626"/>
    <lineage>
        <taxon>Bacteria</taxon>
        <taxon>Pseudomonadati</taxon>
        <taxon>Pseudomonadota</taxon>
        <taxon>Betaproteobacteria</taxon>
        <taxon>Burkholderiales</taxon>
        <taxon>Burkholderiaceae</taxon>
        <taxon>Ralstonia</taxon>
    </lineage>
</organism>
<keyword id="KW-0285">Flavoprotein</keyword>
<keyword id="KW-0288">FMN</keyword>
<keyword id="KW-0503">Monooxygenase</keyword>
<keyword id="KW-0560">Oxidoreductase</keyword>
<accession>B2UAU3</accession>
<name>SSUD_RALPJ</name>